<accession>Q9ZCI1</accession>
<comment type="function">
    <text evidence="1">Exhibits a very high intrinsic GTPase hydrolysis rate. Involved in the addition of a carboxymethylaminomethyl (cmnm) group at the wobble position (U34) of certain tRNAs, forming tRNA-cmnm(5)s(2)U34.</text>
</comment>
<comment type="cofactor">
    <cofactor evidence="1">
        <name>K(+)</name>
        <dbReference type="ChEBI" id="CHEBI:29103"/>
    </cofactor>
    <text evidence="1">Binds 1 potassium ion per subunit.</text>
</comment>
<comment type="subunit">
    <text evidence="1">Homodimer. Heterotetramer of two MnmE and two MnmG subunits.</text>
</comment>
<comment type="subcellular location">
    <subcellularLocation>
        <location evidence="1">Cytoplasm</location>
    </subcellularLocation>
</comment>
<comment type="similarity">
    <text evidence="1">Belongs to the TRAFAC class TrmE-Era-EngA-EngB-Septin-like GTPase superfamily. TrmE GTPase family.</text>
</comment>
<feature type="chain" id="PRO_0000188910" description="tRNA modification GTPase MnmE">
    <location>
        <begin position="1"/>
        <end position="445"/>
    </location>
</feature>
<feature type="domain" description="TrmE-type G">
    <location>
        <begin position="215"/>
        <end position="371"/>
    </location>
</feature>
<feature type="binding site" evidence="1">
    <location>
        <position position="20"/>
    </location>
    <ligand>
        <name>(6S)-5-formyl-5,6,7,8-tetrahydrofolate</name>
        <dbReference type="ChEBI" id="CHEBI:57457"/>
    </ligand>
</feature>
<feature type="binding site" evidence="1">
    <location>
        <position position="79"/>
    </location>
    <ligand>
        <name>(6S)-5-formyl-5,6,7,8-tetrahydrofolate</name>
        <dbReference type="ChEBI" id="CHEBI:57457"/>
    </ligand>
</feature>
<feature type="binding site" evidence="1">
    <location>
        <position position="119"/>
    </location>
    <ligand>
        <name>(6S)-5-formyl-5,6,7,8-tetrahydrofolate</name>
        <dbReference type="ChEBI" id="CHEBI:57457"/>
    </ligand>
</feature>
<feature type="binding site" evidence="1">
    <location>
        <begin position="225"/>
        <end position="230"/>
    </location>
    <ligand>
        <name>GTP</name>
        <dbReference type="ChEBI" id="CHEBI:37565"/>
    </ligand>
</feature>
<feature type="binding site" evidence="1">
    <location>
        <position position="225"/>
    </location>
    <ligand>
        <name>K(+)</name>
        <dbReference type="ChEBI" id="CHEBI:29103"/>
    </ligand>
</feature>
<feature type="binding site" evidence="1">
    <location>
        <position position="229"/>
    </location>
    <ligand>
        <name>Mg(2+)</name>
        <dbReference type="ChEBI" id="CHEBI:18420"/>
    </ligand>
</feature>
<feature type="binding site" evidence="1">
    <location>
        <begin position="244"/>
        <end position="250"/>
    </location>
    <ligand>
        <name>GTP</name>
        <dbReference type="ChEBI" id="CHEBI:37565"/>
    </ligand>
</feature>
<feature type="binding site" evidence="1">
    <location>
        <position position="244"/>
    </location>
    <ligand>
        <name>K(+)</name>
        <dbReference type="ChEBI" id="CHEBI:29103"/>
    </ligand>
</feature>
<feature type="binding site" evidence="1">
    <location>
        <position position="246"/>
    </location>
    <ligand>
        <name>K(+)</name>
        <dbReference type="ChEBI" id="CHEBI:29103"/>
    </ligand>
</feature>
<feature type="binding site" evidence="1">
    <location>
        <position position="249"/>
    </location>
    <ligand>
        <name>K(+)</name>
        <dbReference type="ChEBI" id="CHEBI:29103"/>
    </ligand>
</feature>
<feature type="binding site" evidence="1">
    <location>
        <position position="250"/>
    </location>
    <ligand>
        <name>Mg(2+)</name>
        <dbReference type="ChEBI" id="CHEBI:18420"/>
    </ligand>
</feature>
<feature type="binding site" evidence="1">
    <location>
        <begin position="269"/>
        <end position="272"/>
    </location>
    <ligand>
        <name>GTP</name>
        <dbReference type="ChEBI" id="CHEBI:37565"/>
    </ligand>
</feature>
<feature type="binding site" evidence="1">
    <location>
        <position position="445"/>
    </location>
    <ligand>
        <name>(6S)-5-formyl-5,6,7,8-tetrahydrofolate</name>
        <dbReference type="ChEBI" id="CHEBI:57457"/>
    </ligand>
</feature>
<evidence type="ECO:0000255" key="1">
    <source>
        <dbReference type="HAMAP-Rule" id="MF_00379"/>
    </source>
</evidence>
<sequence length="445" mass="49813">METIFAQSSAFGKAGVAVFRISGPKSLEVLQLLTGRKDFKPRLMYYQQIIVPETNELIDNAMVVYFKLPNSFTGEDVVEIHTHGSKAISIMLINTLLNIADIRLAEAGEFTKRAFLNNKFDLTAAEGIADLINAETIMQHRQAVRQANGGLKELYNKWRNQLLKIISLLEAYIDFPDEDIPESILNDVNNTHKNIVNEISNYLNDNRRGELLNNGLKLAIIGPPNTGKSSLLNFLMQRNIAIVSNIAGTTRDIIEGHLDIGGYPIILQDTAGIRTESTDIIEQEGIKRAINSAKTANIKIVMFDAEKLDSSINNDITGLIDENTIVIINKIDLIEPNKTFAIENRYKCLRVSVKNNIALSNILKNIENIAENLAGVTETPYITNQRHRHYLKQALSHLIDFNLDNDLVLATEDIRMTVRCIGLITGVINVEEILNEIFKNFCIGK</sequence>
<dbReference type="EC" id="3.6.-.-" evidence="1"/>
<dbReference type="EMBL" id="AJ235273">
    <property type="protein sequence ID" value="CAA15187.1"/>
    <property type="molecule type" value="Genomic_DNA"/>
</dbReference>
<dbReference type="PIR" id="C71636">
    <property type="entry name" value="C71636"/>
</dbReference>
<dbReference type="RefSeq" id="NP_221111.1">
    <property type="nucleotide sequence ID" value="NC_000963.1"/>
</dbReference>
<dbReference type="RefSeq" id="WP_004596984.1">
    <property type="nucleotide sequence ID" value="NC_000963.1"/>
</dbReference>
<dbReference type="SMR" id="Q9ZCI1"/>
<dbReference type="STRING" id="272947.gene:17555829"/>
<dbReference type="EnsemblBacteria" id="CAA15187">
    <property type="protein sequence ID" value="CAA15187"/>
    <property type="gene ID" value="CAA15187"/>
</dbReference>
<dbReference type="GeneID" id="57569882"/>
<dbReference type="KEGG" id="rpr:RP759"/>
<dbReference type="PATRIC" id="fig|272947.5.peg.795"/>
<dbReference type="eggNOG" id="COG0486">
    <property type="taxonomic scope" value="Bacteria"/>
</dbReference>
<dbReference type="HOGENOM" id="CLU_019624_3_1_5"/>
<dbReference type="OrthoDB" id="9805918at2"/>
<dbReference type="Proteomes" id="UP000002480">
    <property type="component" value="Chromosome"/>
</dbReference>
<dbReference type="GO" id="GO:0005737">
    <property type="term" value="C:cytoplasm"/>
    <property type="evidence" value="ECO:0007669"/>
    <property type="project" value="UniProtKB-SubCell"/>
</dbReference>
<dbReference type="GO" id="GO:0005525">
    <property type="term" value="F:GTP binding"/>
    <property type="evidence" value="ECO:0007669"/>
    <property type="project" value="UniProtKB-UniRule"/>
</dbReference>
<dbReference type="GO" id="GO:0003924">
    <property type="term" value="F:GTPase activity"/>
    <property type="evidence" value="ECO:0007669"/>
    <property type="project" value="UniProtKB-UniRule"/>
</dbReference>
<dbReference type="GO" id="GO:0046872">
    <property type="term" value="F:metal ion binding"/>
    <property type="evidence" value="ECO:0007669"/>
    <property type="project" value="UniProtKB-KW"/>
</dbReference>
<dbReference type="GO" id="GO:0030488">
    <property type="term" value="P:tRNA methylation"/>
    <property type="evidence" value="ECO:0007669"/>
    <property type="project" value="TreeGrafter"/>
</dbReference>
<dbReference type="GO" id="GO:0002098">
    <property type="term" value="P:tRNA wobble uridine modification"/>
    <property type="evidence" value="ECO:0007669"/>
    <property type="project" value="TreeGrafter"/>
</dbReference>
<dbReference type="CDD" id="cd04164">
    <property type="entry name" value="trmE"/>
    <property type="match status" value="1"/>
</dbReference>
<dbReference type="CDD" id="cd14858">
    <property type="entry name" value="TrmE_N"/>
    <property type="match status" value="1"/>
</dbReference>
<dbReference type="FunFam" id="3.30.1360.120:FF:000007">
    <property type="entry name" value="tRNA modification GTPase GTPBP3, mitochondrial"/>
    <property type="match status" value="1"/>
</dbReference>
<dbReference type="Gene3D" id="3.40.50.300">
    <property type="entry name" value="P-loop containing nucleotide triphosphate hydrolases"/>
    <property type="match status" value="1"/>
</dbReference>
<dbReference type="Gene3D" id="3.30.1360.120">
    <property type="entry name" value="Probable tRNA modification gtpase trme, domain 1"/>
    <property type="match status" value="1"/>
</dbReference>
<dbReference type="Gene3D" id="1.20.120.430">
    <property type="entry name" value="tRNA modification GTPase MnmE domain 2"/>
    <property type="match status" value="1"/>
</dbReference>
<dbReference type="HAMAP" id="MF_00379">
    <property type="entry name" value="GTPase_MnmE"/>
    <property type="match status" value="1"/>
</dbReference>
<dbReference type="InterPro" id="IPR031168">
    <property type="entry name" value="G_TrmE"/>
</dbReference>
<dbReference type="InterPro" id="IPR006073">
    <property type="entry name" value="GTP-bd"/>
</dbReference>
<dbReference type="InterPro" id="IPR018948">
    <property type="entry name" value="GTP-bd_TrmE_N"/>
</dbReference>
<dbReference type="InterPro" id="IPR004520">
    <property type="entry name" value="GTPase_MnmE"/>
</dbReference>
<dbReference type="InterPro" id="IPR027368">
    <property type="entry name" value="MnmE_dom2"/>
</dbReference>
<dbReference type="InterPro" id="IPR025867">
    <property type="entry name" value="MnmE_helical"/>
</dbReference>
<dbReference type="InterPro" id="IPR027417">
    <property type="entry name" value="P-loop_NTPase"/>
</dbReference>
<dbReference type="InterPro" id="IPR005225">
    <property type="entry name" value="Small_GTP-bd"/>
</dbReference>
<dbReference type="InterPro" id="IPR027266">
    <property type="entry name" value="TrmE/GcvT_dom1"/>
</dbReference>
<dbReference type="NCBIfam" id="TIGR00450">
    <property type="entry name" value="mnmE_trmE_thdF"/>
    <property type="match status" value="1"/>
</dbReference>
<dbReference type="NCBIfam" id="NF003661">
    <property type="entry name" value="PRK05291.1-3"/>
    <property type="match status" value="1"/>
</dbReference>
<dbReference type="NCBIfam" id="TIGR00231">
    <property type="entry name" value="small_GTP"/>
    <property type="match status" value="1"/>
</dbReference>
<dbReference type="PANTHER" id="PTHR42714">
    <property type="entry name" value="TRNA MODIFICATION GTPASE GTPBP3"/>
    <property type="match status" value="1"/>
</dbReference>
<dbReference type="PANTHER" id="PTHR42714:SF2">
    <property type="entry name" value="TRNA MODIFICATION GTPASE GTPBP3, MITOCHONDRIAL"/>
    <property type="match status" value="1"/>
</dbReference>
<dbReference type="Pfam" id="PF01926">
    <property type="entry name" value="MMR_HSR1"/>
    <property type="match status" value="1"/>
</dbReference>
<dbReference type="Pfam" id="PF12631">
    <property type="entry name" value="MnmE_helical"/>
    <property type="match status" value="1"/>
</dbReference>
<dbReference type="Pfam" id="PF10396">
    <property type="entry name" value="TrmE_N"/>
    <property type="match status" value="1"/>
</dbReference>
<dbReference type="SUPFAM" id="SSF52540">
    <property type="entry name" value="P-loop containing nucleoside triphosphate hydrolases"/>
    <property type="match status" value="1"/>
</dbReference>
<dbReference type="SUPFAM" id="SSF116878">
    <property type="entry name" value="TrmE connector domain"/>
    <property type="match status" value="1"/>
</dbReference>
<dbReference type="PROSITE" id="PS51709">
    <property type="entry name" value="G_TRME"/>
    <property type="match status" value="1"/>
</dbReference>
<reference key="1">
    <citation type="journal article" date="1998" name="Nature">
        <title>The genome sequence of Rickettsia prowazekii and the origin of mitochondria.</title>
        <authorList>
            <person name="Andersson S.G.E."/>
            <person name="Zomorodipour A."/>
            <person name="Andersson J.O."/>
            <person name="Sicheritz-Ponten T."/>
            <person name="Alsmark U.C.M."/>
            <person name="Podowski R.M."/>
            <person name="Naeslund A.K."/>
            <person name="Eriksson A.-S."/>
            <person name="Winkler H.H."/>
            <person name="Kurland C.G."/>
        </authorList>
    </citation>
    <scope>NUCLEOTIDE SEQUENCE [LARGE SCALE GENOMIC DNA]</scope>
    <source>
        <strain>Madrid E</strain>
    </source>
</reference>
<name>MNME_RICPR</name>
<gene>
    <name evidence="1" type="primary">mnmE</name>
    <name evidence="1" type="synonym">thdF</name>
    <name evidence="1" type="synonym">trmE</name>
    <name type="ordered locus">RP759</name>
</gene>
<keyword id="KW-0963">Cytoplasm</keyword>
<keyword id="KW-0342">GTP-binding</keyword>
<keyword id="KW-0378">Hydrolase</keyword>
<keyword id="KW-0460">Magnesium</keyword>
<keyword id="KW-0479">Metal-binding</keyword>
<keyword id="KW-0547">Nucleotide-binding</keyword>
<keyword id="KW-0630">Potassium</keyword>
<keyword id="KW-1185">Reference proteome</keyword>
<keyword id="KW-0819">tRNA processing</keyword>
<organism>
    <name type="scientific">Rickettsia prowazekii (strain Madrid E)</name>
    <dbReference type="NCBI Taxonomy" id="272947"/>
    <lineage>
        <taxon>Bacteria</taxon>
        <taxon>Pseudomonadati</taxon>
        <taxon>Pseudomonadota</taxon>
        <taxon>Alphaproteobacteria</taxon>
        <taxon>Rickettsiales</taxon>
        <taxon>Rickettsiaceae</taxon>
        <taxon>Rickettsieae</taxon>
        <taxon>Rickettsia</taxon>
        <taxon>typhus group</taxon>
    </lineage>
</organism>
<proteinExistence type="inferred from homology"/>
<protein>
    <recommendedName>
        <fullName evidence="1">tRNA modification GTPase MnmE</fullName>
        <ecNumber evidence="1">3.6.-.-</ecNumber>
    </recommendedName>
</protein>